<name>MCP2_SALTY</name>
<protein>
    <recommendedName>
        <fullName>Methyl-accepting chemotaxis protein II</fullName>
        <shortName>MCP-II</shortName>
    </recommendedName>
    <alternativeName>
        <fullName>Aspartate chemoreceptor protein</fullName>
    </alternativeName>
</protein>
<dbReference type="EMBL" id="J01809">
    <property type="status" value="NOT_ANNOTATED_CDS"/>
    <property type="molecule type" value="Genomic_DNA"/>
</dbReference>
<dbReference type="EMBL" id="AE006468">
    <property type="protein sequence ID" value="AAL20835.1"/>
    <property type="molecule type" value="Genomic_DNA"/>
</dbReference>
<dbReference type="PIR" id="A03441">
    <property type="entry name" value="QREBDT"/>
</dbReference>
<dbReference type="RefSeq" id="NP_460876.1">
    <property type="nucleotide sequence ID" value="NC_003197.2"/>
</dbReference>
<dbReference type="RefSeq" id="WP_000483274.1">
    <property type="nucleotide sequence ID" value="NC_003197.2"/>
</dbReference>
<dbReference type="PDB" id="1JMW">
    <property type="method" value="X-ray"/>
    <property type="resolution" value="1.90 A"/>
    <property type="chains" value="A=36-180"/>
</dbReference>
<dbReference type="PDB" id="1LIH">
    <property type="method" value="X-ray"/>
    <property type="resolution" value="2.20 A"/>
    <property type="chains" value="A=26-188"/>
</dbReference>
<dbReference type="PDB" id="1VLS">
    <property type="method" value="X-ray"/>
    <property type="resolution" value="1.85 A"/>
    <property type="chains" value="A=36-180"/>
</dbReference>
<dbReference type="PDB" id="1VLT">
    <property type="method" value="X-ray"/>
    <property type="resolution" value="2.20 A"/>
    <property type="chains" value="A/B=36-180"/>
</dbReference>
<dbReference type="PDB" id="1WAS">
    <property type="method" value="X-ray"/>
    <property type="resolution" value="2.70 A"/>
    <property type="chains" value="A=36-180"/>
</dbReference>
<dbReference type="PDB" id="1WAT">
    <property type="method" value="X-ray"/>
    <property type="resolution" value="3.00 A"/>
    <property type="chains" value="A/B=36-180"/>
</dbReference>
<dbReference type="PDB" id="2LIG">
    <property type="method" value="X-ray"/>
    <property type="resolution" value="2.00 A"/>
    <property type="chains" value="A/B=26-188"/>
</dbReference>
<dbReference type="PDBsum" id="1JMW"/>
<dbReference type="PDBsum" id="1LIH"/>
<dbReference type="PDBsum" id="1VLS"/>
<dbReference type="PDBsum" id="1VLT"/>
<dbReference type="PDBsum" id="1WAS"/>
<dbReference type="PDBsum" id="1WAT"/>
<dbReference type="PDBsum" id="2LIG"/>
<dbReference type="SMR" id="P02941"/>
<dbReference type="DIP" id="DIP-61268N"/>
<dbReference type="IntAct" id="P02941">
    <property type="interactions" value="1"/>
</dbReference>
<dbReference type="STRING" id="99287.STM1919"/>
<dbReference type="DrugBank" id="DB02365">
    <property type="generic name" value="1,10-Phenanthroline"/>
</dbReference>
<dbReference type="PaxDb" id="99287-STM1919"/>
<dbReference type="GeneID" id="1253440"/>
<dbReference type="KEGG" id="stm:STM1919"/>
<dbReference type="PATRIC" id="fig|99287.12.peg.2035"/>
<dbReference type="HOGENOM" id="CLU_000445_107_16_6"/>
<dbReference type="PhylomeDB" id="P02941"/>
<dbReference type="BioCyc" id="SENT99287:STM1919-MONOMER"/>
<dbReference type="EvolutionaryTrace" id="P02941"/>
<dbReference type="PHI-base" id="PHI:6983"/>
<dbReference type="Proteomes" id="UP000001014">
    <property type="component" value="Chromosome"/>
</dbReference>
<dbReference type="GO" id="GO:0005886">
    <property type="term" value="C:plasma membrane"/>
    <property type="evidence" value="ECO:0000318"/>
    <property type="project" value="GO_Central"/>
</dbReference>
<dbReference type="GO" id="GO:0004888">
    <property type="term" value="F:transmembrane signaling receptor activity"/>
    <property type="evidence" value="ECO:0000318"/>
    <property type="project" value="GO_Central"/>
</dbReference>
<dbReference type="GO" id="GO:0006935">
    <property type="term" value="P:chemotaxis"/>
    <property type="evidence" value="ECO:0000318"/>
    <property type="project" value="GO_Central"/>
</dbReference>
<dbReference type="GO" id="GO:0007165">
    <property type="term" value="P:signal transduction"/>
    <property type="evidence" value="ECO:0007669"/>
    <property type="project" value="UniProtKB-KW"/>
</dbReference>
<dbReference type="CDD" id="cd06225">
    <property type="entry name" value="HAMP"/>
    <property type="match status" value="1"/>
</dbReference>
<dbReference type="CDD" id="cd11386">
    <property type="entry name" value="MCP_signal"/>
    <property type="match status" value="1"/>
</dbReference>
<dbReference type="CDD" id="cd19407">
    <property type="entry name" value="Tar_Tsr_sensor"/>
    <property type="match status" value="1"/>
</dbReference>
<dbReference type="FunFam" id="1.10.287.950:FF:000001">
    <property type="entry name" value="Methyl-accepting chemotaxis sensory transducer"/>
    <property type="match status" value="1"/>
</dbReference>
<dbReference type="Gene3D" id="1.20.120.30">
    <property type="entry name" value="Aspartate receptor, ligand-binding domain"/>
    <property type="match status" value="1"/>
</dbReference>
<dbReference type="Gene3D" id="1.10.287.950">
    <property type="entry name" value="Methyl-accepting chemotaxis protein"/>
    <property type="match status" value="1"/>
</dbReference>
<dbReference type="InterPro" id="IPR035440">
    <property type="entry name" value="4HB_MCP_dom_sf"/>
</dbReference>
<dbReference type="InterPro" id="IPR004090">
    <property type="entry name" value="Chemotax_Me-accpt_rcpt"/>
</dbReference>
<dbReference type="InterPro" id="IPR004091">
    <property type="entry name" value="Chemotax_Me-accpt_rcpt_Me-site"/>
</dbReference>
<dbReference type="InterPro" id="IPR003660">
    <property type="entry name" value="HAMP_dom"/>
</dbReference>
<dbReference type="InterPro" id="IPR051310">
    <property type="entry name" value="MCP_chemotaxis"/>
</dbReference>
<dbReference type="InterPro" id="IPR004089">
    <property type="entry name" value="MCPsignal_dom"/>
</dbReference>
<dbReference type="InterPro" id="IPR003122">
    <property type="entry name" value="Tar_rcpt_lig-bd"/>
</dbReference>
<dbReference type="NCBIfam" id="NF011622">
    <property type="entry name" value="PRK15048.1"/>
    <property type="match status" value="1"/>
</dbReference>
<dbReference type="PANTHER" id="PTHR43531:SF16">
    <property type="entry name" value="METHYL-ACCEPTING CHEMOTAXIS PROTEIN II"/>
    <property type="match status" value="1"/>
</dbReference>
<dbReference type="PANTHER" id="PTHR43531">
    <property type="entry name" value="PROTEIN ICFG"/>
    <property type="match status" value="1"/>
</dbReference>
<dbReference type="Pfam" id="PF00672">
    <property type="entry name" value="HAMP"/>
    <property type="match status" value="1"/>
</dbReference>
<dbReference type="Pfam" id="PF00015">
    <property type="entry name" value="MCPsignal"/>
    <property type="match status" value="1"/>
</dbReference>
<dbReference type="Pfam" id="PF02203">
    <property type="entry name" value="TarH"/>
    <property type="match status" value="1"/>
</dbReference>
<dbReference type="PRINTS" id="PR00260">
    <property type="entry name" value="CHEMTRNSDUCR"/>
</dbReference>
<dbReference type="SMART" id="SM00304">
    <property type="entry name" value="HAMP"/>
    <property type="match status" value="1"/>
</dbReference>
<dbReference type="SMART" id="SM00283">
    <property type="entry name" value="MA"/>
    <property type="match status" value="1"/>
</dbReference>
<dbReference type="SMART" id="SM00319">
    <property type="entry name" value="TarH"/>
    <property type="match status" value="1"/>
</dbReference>
<dbReference type="SUPFAM" id="SSF47170">
    <property type="entry name" value="Aspartate receptor, ligand-binding domain"/>
    <property type="match status" value="1"/>
</dbReference>
<dbReference type="SUPFAM" id="SSF58104">
    <property type="entry name" value="Methyl-accepting chemotaxis protein (MCP) signaling domain"/>
    <property type="match status" value="1"/>
</dbReference>
<dbReference type="PROSITE" id="PS00538">
    <property type="entry name" value="CHEMOTAXIS_TRANSDUC_1"/>
    <property type="match status" value="1"/>
</dbReference>
<dbReference type="PROSITE" id="PS50111">
    <property type="entry name" value="CHEMOTAXIS_TRANSDUC_2"/>
    <property type="match status" value="1"/>
</dbReference>
<dbReference type="PROSITE" id="PS50885">
    <property type="entry name" value="HAMP"/>
    <property type="match status" value="1"/>
</dbReference>
<reference key="1">
    <citation type="journal article" date="1983" name="Science">
        <title>Separation of signal transduction and adaptation functions of the aspartate receptor in bacterial sensing.</title>
        <authorList>
            <person name="Russo A.F."/>
            <person name="Koshland D.E. Jr."/>
        </authorList>
    </citation>
    <scope>NUCLEOTIDE SEQUENCE [GENOMIC DNA]</scope>
</reference>
<reference key="2">
    <citation type="thesis" date="1986" institute="University of Berkeley" country="United States">
        <authorList>
            <person name="Stock A."/>
        </authorList>
    </citation>
    <scope>SEQUENCE REVISION TO 236 AND 498</scope>
</reference>
<reference key="3">
    <citation type="journal article" date="2001" name="Nature">
        <title>Complete genome sequence of Salmonella enterica serovar Typhimurium LT2.</title>
        <authorList>
            <person name="McClelland M."/>
            <person name="Sanderson K.E."/>
            <person name="Spieth J."/>
            <person name="Clifton S.W."/>
            <person name="Latreille P."/>
            <person name="Courtney L."/>
            <person name="Porwollik S."/>
            <person name="Ali J."/>
            <person name="Dante M."/>
            <person name="Du F."/>
            <person name="Hou S."/>
            <person name="Layman D."/>
            <person name="Leonard S."/>
            <person name="Nguyen C."/>
            <person name="Scott K."/>
            <person name="Holmes A."/>
            <person name="Grewal N."/>
            <person name="Mulvaney E."/>
            <person name="Ryan E."/>
            <person name="Sun H."/>
            <person name="Florea L."/>
            <person name="Miller W."/>
            <person name="Stoneking T."/>
            <person name="Nhan M."/>
            <person name="Waterston R."/>
            <person name="Wilson R.K."/>
        </authorList>
    </citation>
    <scope>NUCLEOTIDE SEQUENCE [LARGE SCALE GENOMIC DNA]</scope>
    <source>
        <strain>LT2 / SGSC1412 / ATCC 700720</strain>
    </source>
</reference>
<reference key="4">
    <citation type="journal article" date="1991" name="Science">
        <title>Three-dimensional structures of the ligand-binding domain of the bacterial aspartate receptor with and without a ligand.</title>
        <authorList>
            <person name="Milburn M.V."/>
            <person name="Prive G.G."/>
            <person name="Milligan D.L."/>
            <person name="Scott W.G."/>
            <person name="Yeh J."/>
            <person name="Jancarik J."/>
            <person name="Koshland D.E. Jr."/>
            <person name="Kim S.-H."/>
        </authorList>
    </citation>
    <scope>X-RAY CRYSTALLOGRAPHY (2.2 ANGSTROMS) OF 26-188</scope>
</reference>
<reference key="5">
    <citation type="journal article" date="1993" name="J. Biol. Chem.">
        <title>The three-dimensional structure of the ligand-binding domain of a wild-type bacterial chemotaxis receptor. Structural comparison to the cross-linked mutant forms and conformational changes upon ligand binding.</title>
        <authorList>
            <person name="Yeh J.I."/>
            <person name="Biemann H.-P."/>
            <person name="Pandit J."/>
            <person name="Koshland D.E. Jr."/>
            <person name="Kim S.-H."/>
        </authorList>
    </citation>
    <scope>X-RAY CRYSTALLOGRAPHY (2.7 ANGSTROMS) OF 36-180</scope>
</reference>
<reference key="6">
    <citation type="journal article" date="1996" name="J. Mol. Biol.">
        <title>High-resolution structures of the ligand binding domain of the wild-type bacterial aspartate receptor.</title>
        <authorList>
            <person name="Yeh J.I."/>
            <person name="Biemann H.-P."/>
            <person name="Prive G.G."/>
            <person name="Pandit J."/>
            <person name="Koshland D.E. Jr."/>
            <person name="Kim S.-H."/>
        </authorList>
    </citation>
    <scope>X-RAY CRYSTALLOGRAPHY (1.85 ANGSTROMS) OF 26-180</scope>
</reference>
<gene>
    <name type="primary">tar</name>
    <name type="synonym">cheM</name>
    <name type="ordered locus">STM1919</name>
</gene>
<sequence>MFNRIRVVTMLMMVLGVFALLQLVSGGLLFSSLQHNQQGFVISNELRQQQSELTSTWDLMLQTRINLSRSAARMMMDASNQQSSAKTDLLQNAKTTLAQAAAHYANFKNMTPLPAMAEASANVDEKYQRYQAALAELIQFLDNGNMDAYFAQPTQGMQNALGEALGNYARVSENLYRQTFDQSAHDYRFAQWQLGVLAVVLVLILMVVWFGIRHALLNPLARVITHIREIASGDLTKTLTVSGRNEIGELAGTVEHMQRSLIDTVTQVREGSDAIYSGTSEIAAGNTDLSSRTEQQASALEETAASMEQLTATVKQNADNARQASQLAQSASETARHGGKVVDGVVNTMHEIADSSKKIADIISVIDGIAFQTNILALNAAVEAARAGEQGRGFAVVAGEVRNLASRSAQAAKEIKALIEDSVSRVDTGSVLVESAGETMTDIVNAVTRVTDIMGEIASASDEQSRGIDQVALAVSEMDRVTQQNASLVQESAAAAAALEEQASRLTQAVSAFRLASRPLAVNKPEMRLSVNAQSGNTPQSLAARDDANWETF</sequence>
<keyword id="KW-0002">3D-structure</keyword>
<keyword id="KW-0997">Cell inner membrane</keyword>
<keyword id="KW-1003">Cell membrane</keyword>
<keyword id="KW-0145">Chemotaxis</keyword>
<keyword id="KW-0472">Membrane</keyword>
<keyword id="KW-0488">Methylation</keyword>
<keyword id="KW-1185">Reference proteome</keyword>
<keyword id="KW-0807">Transducer</keyword>
<keyword id="KW-0812">Transmembrane</keyword>
<keyword id="KW-1133">Transmembrane helix</keyword>
<evidence type="ECO:0000250" key="1">
    <source>
        <dbReference type="UniProtKB" id="P02942"/>
    </source>
</evidence>
<evidence type="ECO:0000255" key="2"/>
<evidence type="ECO:0000255" key="3">
    <source>
        <dbReference type="PROSITE-ProRule" id="PRU00102"/>
    </source>
</evidence>
<evidence type="ECO:0000255" key="4">
    <source>
        <dbReference type="PROSITE-ProRule" id="PRU00284"/>
    </source>
</evidence>
<evidence type="ECO:0000256" key="5">
    <source>
        <dbReference type="SAM" id="MobiDB-lite"/>
    </source>
</evidence>
<evidence type="ECO:0000305" key="6"/>
<evidence type="ECO:0007829" key="7">
    <source>
        <dbReference type="PDB" id="1VLS"/>
    </source>
</evidence>
<evidence type="ECO:0007829" key="8">
    <source>
        <dbReference type="PDB" id="1WAT"/>
    </source>
</evidence>
<evidence type="ECO:0007829" key="9">
    <source>
        <dbReference type="PDB" id="2LIG"/>
    </source>
</evidence>
<proteinExistence type="evidence at protein level"/>
<feature type="chain" id="PRO_0000110539" description="Methyl-accepting chemotaxis protein II">
    <location>
        <begin position="1"/>
        <end position="553"/>
    </location>
</feature>
<feature type="topological domain" description="Cytoplasmic" evidence="2">
    <location>
        <begin position="1"/>
        <end position="6"/>
    </location>
</feature>
<feature type="transmembrane region" description="Helical" evidence="2">
    <location>
        <begin position="7"/>
        <end position="33"/>
    </location>
</feature>
<feature type="topological domain" description="Periplasmic" evidence="2">
    <location>
        <begin position="34"/>
        <end position="190"/>
    </location>
</feature>
<feature type="transmembrane region" description="Helical" evidence="2">
    <location>
        <begin position="191"/>
        <end position="211"/>
    </location>
</feature>
<feature type="topological domain" description="Cytoplasmic" evidence="2">
    <location>
        <begin position="212"/>
        <end position="553"/>
    </location>
</feature>
<feature type="domain" description="HAMP" evidence="3">
    <location>
        <begin position="214"/>
        <end position="266"/>
    </location>
</feature>
<feature type="domain" description="Methyl-accepting transducer" evidence="4">
    <location>
        <begin position="271"/>
        <end position="500"/>
    </location>
</feature>
<feature type="region of interest" description="The 3 Arg may form a positively charged pocket, which binds the alpha-carboxyl group of the attractant AA">
    <location>
        <begin position="64"/>
        <end position="73"/>
    </location>
</feature>
<feature type="region of interest" description="Disordered" evidence="5">
    <location>
        <begin position="532"/>
        <end position="553"/>
    </location>
</feature>
<feature type="compositionally biased region" description="Polar residues" evidence="5">
    <location>
        <begin position="532"/>
        <end position="541"/>
    </location>
</feature>
<feature type="compositionally biased region" description="Basic and acidic residues" evidence="5">
    <location>
        <begin position="544"/>
        <end position="553"/>
    </location>
</feature>
<feature type="modified residue" description="Glutamate methyl ester (Gln)" evidence="1">
    <location>
        <position position="295"/>
    </location>
</feature>
<feature type="modified residue" description="Glutamate methyl ester (Glu)" evidence="1">
    <location>
        <position position="302"/>
    </location>
</feature>
<feature type="modified residue" description="Glutamate methyl ester (Gln)" evidence="1">
    <location>
        <position position="309"/>
    </location>
</feature>
<feature type="modified residue" description="Glutamate methyl ester (Glu)" evidence="1">
    <location>
        <position position="491"/>
    </location>
</feature>
<feature type="modified residue" description="Glutamate methyl ester (Glu)" evidence="1">
    <location>
        <position position="500"/>
    </location>
</feature>
<feature type="sequence conflict" description="In Ref. 1." evidence="6" ref="1">
    <original>E</original>
    <variation>G</variation>
    <location>
        <position position="246"/>
    </location>
</feature>
<feature type="sequence conflict" description="In Ref. 1." evidence="6" ref="1">
    <original>T</original>
    <variation>A</variation>
    <location>
        <position position="451"/>
    </location>
</feature>
<feature type="strand" evidence="9">
    <location>
        <begin position="28"/>
        <end position="32"/>
    </location>
</feature>
<feature type="helix" evidence="7">
    <location>
        <begin position="36"/>
        <end position="38"/>
    </location>
</feature>
<feature type="helix" evidence="7">
    <location>
        <begin position="39"/>
        <end position="73"/>
    </location>
</feature>
<feature type="turn" evidence="8">
    <location>
        <begin position="75"/>
        <end position="78"/>
    </location>
</feature>
<feature type="strand" evidence="7">
    <location>
        <begin position="84"/>
        <end position="88"/>
    </location>
</feature>
<feature type="helix" evidence="7">
    <location>
        <begin position="89"/>
        <end position="109"/>
    </location>
</feature>
<feature type="helix" evidence="7">
    <location>
        <begin position="114"/>
        <end position="116"/>
    </location>
</feature>
<feature type="helix" evidence="7">
    <location>
        <begin position="117"/>
        <end position="142"/>
    </location>
</feature>
<feature type="helix" evidence="7">
    <location>
        <begin position="146"/>
        <end position="151"/>
    </location>
</feature>
<feature type="helix" evidence="7">
    <location>
        <begin position="154"/>
        <end position="177"/>
    </location>
</feature>
<accession>P02941</accession>
<comment type="function">
    <text>Receptor for the attractant L-aspartate and related amino and dicarboxylic acids. Tar mediates taxis away from the repellents cobalt and nickel. Unlike in E.coli tar, it does not mediate maltose taxis.</text>
</comment>
<comment type="function">
    <text>Chemotactic-signal transducers respond to changes in the concentration of attractants and repellents in the environment, transduce a signal from the outside to the inside of the cell, and facilitate sensory adaptation through the variation of the level of methylation. Attractants increase the level of methylation while repellents decrease the level of methylation, the methyl groups are added by the methyltransferase CheR and removed by the methylesterase CheB.</text>
</comment>
<comment type="subcellular location">
    <subcellularLocation>
        <location>Cell inner membrane</location>
        <topology>Multi-pass membrane protein</topology>
    </subcellularLocation>
</comment>
<comment type="similarity">
    <text evidence="6">Belongs to the methyl-accepting chemotaxis (MCP) protein family.</text>
</comment>
<organism>
    <name type="scientific">Salmonella typhimurium (strain LT2 / SGSC1412 / ATCC 700720)</name>
    <dbReference type="NCBI Taxonomy" id="99287"/>
    <lineage>
        <taxon>Bacteria</taxon>
        <taxon>Pseudomonadati</taxon>
        <taxon>Pseudomonadota</taxon>
        <taxon>Gammaproteobacteria</taxon>
        <taxon>Enterobacterales</taxon>
        <taxon>Enterobacteriaceae</taxon>
        <taxon>Salmonella</taxon>
    </lineage>
</organism>